<keyword id="KW-0002">3D-structure</keyword>
<keyword id="KW-0378">Hydrolase</keyword>
<keyword id="KW-0472">Membrane</keyword>
<keyword id="KW-0645">Protease</keyword>
<keyword id="KW-0964">Secreted</keyword>
<keyword id="KW-0788">Thiol protease</keyword>
<keyword id="KW-0812">Transmembrane</keyword>
<keyword id="KW-1133">Transmembrane helix</keyword>
<keyword id="KW-0833">Ubl conjugation pathway</keyword>
<keyword id="KW-0843">Virulence</keyword>
<feature type="chain" id="PRO_0000396493" description="Deubiquitinase and deneddylase Dub1">
    <location>
        <begin position="1"/>
        <end position="401"/>
    </location>
</feature>
<feature type="transmembrane region" description="Helical" evidence="2">
    <location>
        <begin position="40"/>
        <end position="60"/>
    </location>
</feature>
<feature type="region of interest" description="Disordered" evidence="3">
    <location>
        <begin position="1"/>
        <end position="24"/>
    </location>
</feature>
<feature type="region of interest" description="Disordered" evidence="3">
    <location>
        <begin position="77"/>
        <end position="130"/>
    </location>
</feature>
<feature type="compositionally biased region" description="Polar residues" evidence="3">
    <location>
        <begin position="1"/>
        <end position="11"/>
    </location>
</feature>
<feature type="compositionally biased region" description="Pro residues" evidence="3">
    <location>
        <begin position="86"/>
        <end position="128"/>
    </location>
</feature>
<feature type="active site" evidence="2">
    <location>
        <position position="275"/>
    </location>
</feature>
<feature type="active site" evidence="2">
    <location>
        <position position="292"/>
    </location>
</feature>
<feature type="active site" evidence="2">
    <location>
        <position position="345"/>
    </location>
</feature>
<feature type="helix" evidence="7">
    <location>
        <begin position="147"/>
        <end position="149"/>
    </location>
</feature>
<feature type="helix" evidence="10">
    <location>
        <begin position="153"/>
        <end position="162"/>
    </location>
</feature>
<feature type="helix" evidence="8">
    <location>
        <begin position="168"/>
        <end position="181"/>
    </location>
</feature>
<feature type="turn" evidence="8">
    <location>
        <begin position="196"/>
        <end position="198"/>
    </location>
</feature>
<feature type="helix" evidence="8">
    <location>
        <begin position="199"/>
        <end position="214"/>
    </location>
</feature>
<feature type="strand" evidence="8">
    <location>
        <begin position="225"/>
        <end position="227"/>
    </location>
</feature>
<feature type="helix" evidence="8">
    <location>
        <begin position="229"/>
        <end position="238"/>
    </location>
</feature>
<feature type="strand" evidence="8">
    <location>
        <begin position="241"/>
        <end position="248"/>
    </location>
</feature>
<feature type="helix" evidence="8">
    <location>
        <begin position="255"/>
        <end position="268"/>
    </location>
</feature>
<feature type="strand" evidence="8">
    <location>
        <begin position="275"/>
        <end position="282"/>
    </location>
</feature>
<feature type="turn" evidence="8">
    <location>
        <begin position="283"/>
        <end position="286"/>
    </location>
</feature>
<feature type="strand" evidence="8">
    <location>
        <begin position="287"/>
        <end position="291"/>
    </location>
</feature>
<feature type="strand" evidence="8">
    <location>
        <begin position="295"/>
        <end position="299"/>
    </location>
</feature>
<feature type="helix" evidence="8">
    <location>
        <begin position="301"/>
        <end position="318"/>
    </location>
</feature>
<feature type="strand" evidence="10">
    <location>
        <begin position="322"/>
        <end position="324"/>
    </location>
</feature>
<feature type="strand" evidence="8">
    <location>
        <begin position="328"/>
        <end position="331"/>
    </location>
</feature>
<feature type="helix" evidence="8">
    <location>
        <begin position="345"/>
        <end position="358"/>
    </location>
</feature>
<feature type="strand" evidence="6">
    <location>
        <begin position="360"/>
        <end position="362"/>
    </location>
</feature>
<feature type="helix" evidence="8">
    <location>
        <begin position="364"/>
        <end position="366"/>
    </location>
</feature>
<feature type="helix" evidence="8">
    <location>
        <begin position="372"/>
        <end position="390"/>
    </location>
</feature>
<feature type="strand" evidence="9">
    <location>
        <begin position="391"/>
        <end position="393"/>
    </location>
</feature>
<accession>B0B9A0</accession>
<organism>
    <name type="scientific">Chlamydia trachomatis serovar L2 (strain ATCC VR-902B / DSM 19102 / 434/Bu)</name>
    <dbReference type="NCBI Taxonomy" id="471472"/>
    <lineage>
        <taxon>Bacteria</taxon>
        <taxon>Pseudomonadati</taxon>
        <taxon>Chlamydiota</taxon>
        <taxon>Chlamydiia</taxon>
        <taxon>Chlamydiales</taxon>
        <taxon>Chlamydiaceae</taxon>
        <taxon>Chlamydia/Chlamydophila group</taxon>
        <taxon>Chlamydia</taxon>
    </lineage>
</organism>
<gene>
    <name type="primary">cdu1</name>
    <name type="ordered locus">CTL0247</name>
</gene>
<reference key="1">
    <citation type="journal article" date="2008" name="Genome Res.">
        <title>Chlamydia trachomatis: genome sequence analysis of lymphogranuloma venereum isolates.</title>
        <authorList>
            <person name="Thomson N.R."/>
            <person name="Holden M.T.G."/>
            <person name="Carder C."/>
            <person name="Lennard N."/>
            <person name="Lockey S.J."/>
            <person name="Marsh P."/>
            <person name="Skipp P."/>
            <person name="O'Connor C.D."/>
            <person name="Goodhead I."/>
            <person name="Norbertzcak H."/>
            <person name="Harris B."/>
            <person name="Ormond D."/>
            <person name="Rance R."/>
            <person name="Quail M.A."/>
            <person name="Parkhill J."/>
            <person name="Stephens R.S."/>
            <person name="Clarke I.N."/>
        </authorList>
    </citation>
    <scope>NUCLEOTIDE SEQUENCE [LARGE SCALE GENOMIC DNA]</scope>
    <source>
        <strain>ATCC VR-902B / DSM 19102 / 434/Bu</strain>
    </source>
</reference>
<reference key="2">
    <citation type="journal article" date="2008" name="Cell. Microbiol.">
        <title>ChlaDub1 of Chlamydia trachomatis suppresses NF-kappaB activation and inhibits IkappaBalpha ubiquitination and degradation.</title>
        <authorList>
            <person name="Le Negrate G."/>
            <person name="Krieg A."/>
            <person name="Faustin B."/>
            <person name="Loeffler M."/>
            <person name="Godzik A."/>
            <person name="Krajewski S."/>
            <person name="Reed J.C."/>
        </authorList>
    </citation>
    <scope>FUNCTION IN VIRULENCE</scope>
    <scope>INTERACTION WITH HOST NFKBIA</scope>
    <scope>SUBCELLULAR LOCATION</scope>
    <scope>INDUCTION</scope>
</reference>
<dbReference type="EC" id="3.4.22.-"/>
<dbReference type="EMBL" id="AM884176">
    <property type="protein sequence ID" value="CAP03687.1"/>
    <property type="molecule type" value="Genomic_DNA"/>
</dbReference>
<dbReference type="RefSeq" id="WP_009873475.1">
    <property type="nucleotide sequence ID" value="NC_010287.1"/>
</dbReference>
<dbReference type="RefSeq" id="YP_001654332.1">
    <property type="nucleotide sequence ID" value="NC_010287.1"/>
</dbReference>
<dbReference type="PDB" id="5B5Q">
    <property type="method" value="X-ray"/>
    <property type="resolution" value="1.70 A"/>
    <property type="chains" value="A=159-401, B=155-401"/>
</dbReference>
<dbReference type="PDB" id="5HAG">
    <property type="method" value="X-ray"/>
    <property type="resolution" value="2.10 A"/>
    <property type="chains" value="A=130-401"/>
</dbReference>
<dbReference type="PDB" id="6FDK">
    <property type="method" value="X-ray"/>
    <property type="resolution" value="1.60 A"/>
    <property type="chains" value="A=155-401"/>
</dbReference>
<dbReference type="PDB" id="6FDQ">
    <property type="method" value="X-ray"/>
    <property type="resolution" value="2.30 A"/>
    <property type="chains" value="A/B=155-401"/>
</dbReference>
<dbReference type="PDB" id="6FDU">
    <property type="method" value="X-ray"/>
    <property type="resolution" value="2.30 A"/>
    <property type="chains" value="A/B=155-401"/>
</dbReference>
<dbReference type="PDB" id="6GZS">
    <property type="method" value="X-ray"/>
    <property type="resolution" value="1.90 A"/>
    <property type="chains" value="A=130-401"/>
</dbReference>
<dbReference type="PDB" id="6GZT">
    <property type="method" value="X-ray"/>
    <property type="resolution" value="2.10 A"/>
    <property type="chains" value="A=130-401"/>
</dbReference>
<dbReference type="PDBsum" id="5B5Q"/>
<dbReference type="PDBsum" id="5HAG"/>
<dbReference type="PDBsum" id="6FDK"/>
<dbReference type="PDBsum" id="6FDQ"/>
<dbReference type="PDBsum" id="6FDU"/>
<dbReference type="PDBsum" id="6GZS"/>
<dbReference type="PDBsum" id="6GZT"/>
<dbReference type="SMR" id="B0B9A0"/>
<dbReference type="MEROPS" id="C48.032"/>
<dbReference type="KEGG" id="ctb:CTL0247"/>
<dbReference type="PATRIC" id="fig|471472.4.peg.264"/>
<dbReference type="HOGENOM" id="CLU_067510_0_0_0"/>
<dbReference type="Proteomes" id="UP001154402">
    <property type="component" value="Chromosome"/>
</dbReference>
<dbReference type="GO" id="GO:0005576">
    <property type="term" value="C:extracellular region"/>
    <property type="evidence" value="ECO:0000314"/>
    <property type="project" value="UniProtKB"/>
</dbReference>
<dbReference type="GO" id="GO:0043657">
    <property type="term" value="C:host cell"/>
    <property type="evidence" value="ECO:0007669"/>
    <property type="project" value="UniProtKB-SubCell"/>
</dbReference>
<dbReference type="GO" id="GO:0016020">
    <property type="term" value="C:membrane"/>
    <property type="evidence" value="ECO:0007669"/>
    <property type="project" value="UniProtKB-SubCell"/>
</dbReference>
<dbReference type="GO" id="GO:0004843">
    <property type="term" value="F:cysteine-type deubiquitinase activity"/>
    <property type="evidence" value="ECO:0000250"/>
    <property type="project" value="UniProtKB"/>
</dbReference>
<dbReference type="GO" id="GO:0019784">
    <property type="term" value="F:deNEDDylase activity"/>
    <property type="evidence" value="ECO:0000250"/>
    <property type="project" value="UniProtKB"/>
</dbReference>
<dbReference type="GO" id="GO:0000338">
    <property type="term" value="P:protein deneddylation"/>
    <property type="evidence" value="ECO:0000250"/>
    <property type="project" value="UniProtKB"/>
</dbReference>
<dbReference type="GO" id="GO:0016579">
    <property type="term" value="P:protein deubiquitination"/>
    <property type="evidence" value="ECO:0000250"/>
    <property type="project" value="UniProtKB"/>
</dbReference>
<dbReference type="GO" id="GO:0006508">
    <property type="term" value="P:proteolysis"/>
    <property type="evidence" value="ECO:0007669"/>
    <property type="project" value="UniProtKB-KW"/>
</dbReference>
<dbReference type="FunFam" id="3.40.395.10:FF:000016">
    <property type="entry name" value="Deubiquitinase and deneddylase Dub1"/>
    <property type="match status" value="1"/>
</dbReference>
<dbReference type="Gene3D" id="3.40.395.10">
    <property type="entry name" value="Adenoviral Proteinase, Chain A"/>
    <property type="match status" value="1"/>
</dbReference>
<dbReference type="InterPro" id="IPR038765">
    <property type="entry name" value="Papain-like_cys_pep_sf"/>
</dbReference>
<dbReference type="InterPro" id="IPR003653">
    <property type="entry name" value="Peptidase_C48_C"/>
</dbReference>
<dbReference type="Pfam" id="PF02902">
    <property type="entry name" value="Peptidase_C48"/>
    <property type="match status" value="1"/>
</dbReference>
<dbReference type="SUPFAM" id="SSF54001">
    <property type="entry name" value="Cysteine proteinases"/>
    <property type="match status" value="1"/>
</dbReference>
<dbReference type="PROSITE" id="PS50600">
    <property type="entry name" value="ULP_PROTEASE"/>
    <property type="match status" value="1"/>
</dbReference>
<protein>
    <recommendedName>
        <fullName>Deubiquitinase and deneddylase Dub1</fullName>
        <shortName>ChlaDub1</shortName>
        <ecNumber>3.4.22.-</ecNumber>
    </recommendedName>
</protein>
<proteinExistence type="evidence at protein level"/>
<comment type="function">
    <text evidence="1 4">Effector proteins function to alter host cell physiology and promote bacterial survival in host tissues. This protease possesses deubiquitinating and deneddylating activities (By similarity). Impairs ubiquitination and degradation of NF-kappa-B inhibitor alpha (NFKBIA), thereby preventing NF-kappa-B activation.</text>
</comment>
<comment type="subunit">
    <text>Binds to host NFKBIA.</text>
</comment>
<comment type="subcellular location">
    <subcellularLocation>
        <location evidence="4">Secreted</location>
    </subcellularLocation>
    <subcellularLocation>
        <location evidence="4">Host cell</location>
    </subcellularLocation>
    <subcellularLocation>
        <location evidence="4">Membrane</location>
        <topology evidence="4">Single-pass membrane protein</topology>
    </subcellularLocation>
    <text>Secreted, and delivered into the host cell. Located predominantly on the plasma membrane and to a lesser extent on intracellular membranes, especially the host cell nuclear envelope.</text>
</comment>
<comment type="induction">
    <text evidence="4">Expressed late in the infectious cycle.</text>
</comment>
<comment type="similarity">
    <text evidence="5">Belongs to the peptidase C48 family.</text>
</comment>
<name>CDUB1_CHLT2</name>
<evidence type="ECO:0000250" key="1"/>
<evidence type="ECO:0000255" key="2"/>
<evidence type="ECO:0000256" key="3">
    <source>
        <dbReference type="SAM" id="MobiDB-lite"/>
    </source>
</evidence>
<evidence type="ECO:0000269" key="4">
    <source>
    </source>
</evidence>
<evidence type="ECO:0000305" key="5"/>
<evidence type="ECO:0007829" key="6">
    <source>
        <dbReference type="PDB" id="5B5Q"/>
    </source>
</evidence>
<evidence type="ECO:0007829" key="7">
    <source>
        <dbReference type="PDB" id="5HAG"/>
    </source>
</evidence>
<evidence type="ECO:0007829" key="8">
    <source>
        <dbReference type="PDB" id="6FDK"/>
    </source>
</evidence>
<evidence type="ECO:0007829" key="9">
    <source>
        <dbReference type="PDB" id="6FDU"/>
    </source>
</evidence>
<evidence type="ECO:0007829" key="10">
    <source>
        <dbReference type="PDB" id="6GZS"/>
    </source>
</evidence>
<sequence length="401" mass="44977">MLSPTNSTSKTAPVPPRDSSKPVLISEEPRNQLLQKVARTALAVLLVVVTLGLILLFYSFSDLQSFPWCCQTHPSTKEQPTISIPVPLPSPPLAVPRPSTPPPPVISRPSTPSAPKPSTPPPLLPKAPKPVKTQEDLLPLVPEQVFVEMYEDMARRQTIEALVPAWDSDIIFKCLCYFHTLYPGLIPLETFPPATIFNFKQKIISILEDKKAVLRGEPIKGPLPICCSKENYRRHLQRTTLLPVFMWYHPTPKTLSDTMQTMKQLAIKGSVGASHWLLVIVDIQARRLVYFDSLYNYVMPPENMKKELQSFAQQLDQVYPAYDSKKFSVKIAAKEVIQRGSGSSCGAWCCQFLHWYLKDPLTDALNDLPVDSVERHENLASFVQACEAAVQDLPELSWPEA</sequence>